<accession>Q7ANW8</accession>
<comment type="similarity">
    <text evidence="2">Belongs to the UPF0337 (CsbD) family.</text>
</comment>
<proteinExistence type="inferred from homology"/>
<gene>
    <name type="ordered locus">lin2261</name>
</gene>
<protein>
    <recommendedName>
        <fullName>UPF0337 protein lin2261</fullName>
    </recommendedName>
</protein>
<sequence>MSEDKGMKDKAKGLKDKVVGDAKDKFGKATDDKGKQVEGKAQKAKGEVEDKTGDAKKKLSE</sequence>
<dbReference type="EMBL" id="AL596171">
    <property type="protein sequence ID" value="CAC97489.1"/>
    <property type="molecule type" value="Genomic_DNA"/>
</dbReference>
<dbReference type="PIR" id="AF1344">
    <property type="entry name" value="AF1344"/>
</dbReference>
<dbReference type="RefSeq" id="WP_003722282.1">
    <property type="nucleotide sequence ID" value="NC_003212.1"/>
</dbReference>
<dbReference type="SMR" id="Q7ANW8"/>
<dbReference type="KEGG" id="lin:lin2261"/>
<dbReference type="eggNOG" id="COG3237">
    <property type="taxonomic scope" value="Bacteria"/>
</dbReference>
<dbReference type="HOGENOM" id="CLU_135567_3_0_9"/>
<dbReference type="OrthoDB" id="2941817at2"/>
<dbReference type="Proteomes" id="UP000002513">
    <property type="component" value="Chromosome"/>
</dbReference>
<dbReference type="Gene3D" id="1.10.1470.10">
    <property type="entry name" value="YjbJ"/>
    <property type="match status" value="1"/>
</dbReference>
<dbReference type="InterPro" id="IPR008462">
    <property type="entry name" value="CsbD"/>
</dbReference>
<dbReference type="InterPro" id="IPR036629">
    <property type="entry name" value="YjbJ_sf"/>
</dbReference>
<dbReference type="Pfam" id="PF05532">
    <property type="entry name" value="CsbD"/>
    <property type="match status" value="1"/>
</dbReference>
<dbReference type="SUPFAM" id="SSF69047">
    <property type="entry name" value="Hypothetical protein YjbJ"/>
    <property type="match status" value="1"/>
</dbReference>
<evidence type="ECO:0000256" key="1">
    <source>
        <dbReference type="SAM" id="MobiDB-lite"/>
    </source>
</evidence>
<evidence type="ECO:0000305" key="2"/>
<name>Y2261_LISIN</name>
<reference key="1">
    <citation type="journal article" date="2001" name="Science">
        <title>Comparative genomics of Listeria species.</title>
        <authorList>
            <person name="Glaser P."/>
            <person name="Frangeul L."/>
            <person name="Buchrieser C."/>
            <person name="Rusniok C."/>
            <person name="Amend A."/>
            <person name="Baquero F."/>
            <person name="Berche P."/>
            <person name="Bloecker H."/>
            <person name="Brandt P."/>
            <person name="Chakraborty T."/>
            <person name="Charbit A."/>
            <person name="Chetouani F."/>
            <person name="Couve E."/>
            <person name="de Daruvar A."/>
            <person name="Dehoux P."/>
            <person name="Domann E."/>
            <person name="Dominguez-Bernal G."/>
            <person name="Duchaud E."/>
            <person name="Durant L."/>
            <person name="Dussurget O."/>
            <person name="Entian K.-D."/>
            <person name="Fsihi H."/>
            <person name="Garcia-del Portillo F."/>
            <person name="Garrido P."/>
            <person name="Gautier L."/>
            <person name="Goebel W."/>
            <person name="Gomez-Lopez N."/>
            <person name="Hain T."/>
            <person name="Hauf J."/>
            <person name="Jackson D."/>
            <person name="Jones L.-M."/>
            <person name="Kaerst U."/>
            <person name="Kreft J."/>
            <person name="Kuhn M."/>
            <person name="Kunst F."/>
            <person name="Kurapkat G."/>
            <person name="Madueno E."/>
            <person name="Maitournam A."/>
            <person name="Mata Vicente J."/>
            <person name="Ng E."/>
            <person name="Nedjari H."/>
            <person name="Nordsiek G."/>
            <person name="Novella S."/>
            <person name="de Pablos B."/>
            <person name="Perez-Diaz J.-C."/>
            <person name="Purcell R."/>
            <person name="Remmel B."/>
            <person name="Rose M."/>
            <person name="Schlueter T."/>
            <person name="Simoes N."/>
            <person name="Tierrez A."/>
            <person name="Vazquez-Boland J.-A."/>
            <person name="Voss H."/>
            <person name="Wehland J."/>
            <person name="Cossart P."/>
        </authorList>
    </citation>
    <scope>NUCLEOTIDE SEQUENCE [LARGE SCALE GENOMIC DNA]</scope>
    <source>
        <strain>ATCC BAA-680 / CLIP 11262</strain>
    </source>
</reference>
<feature type="chain" id="PRO_0000210008" description="UPF0337 protein lin2261">
    <location>
        <begin position="1"/>
        <end position="61"/>
    </location>
</feature>
<feature type="region of interest" description="Disordered" evidence="1">
    <location>
        <begin position="1"/>
        <end position="61"/>
    </location>
</feature>
<organism>
    <name type="scientific">Listeria innocua serovar 6a (strain ATCC BAA-680 / CLIP 11262)</name>
    <dbReference type="NCBI Taxonomy" id="272626"/>
    <lineage>
        <taxon>Bacteria</taxon>
        <taxon>Bacillati</taxon>
        <taxon>Bacillota</taxon>
        <taxon>Bacilli</taxon>
        <taxon>Bacillales</taxon>
        <taxon>Listeriaceae</taxon>
        <taxon>Listeria</taxon>
    </lineage>
</organism>